<comment type="function">
    <text evidence="1">Bifunctional enzyme with both catalase and broad-spectrum peroxidase activity.</text>
</comment>
<comment type="catalytic activity">
    <reaction evidence="1">
        <text>H2O2 + AH2 = A + 2 H2O</text>
        <dbReference type="Rhea" id="RHEA:30275"/>
        <dbReference type="ChEBI" id="CHEBI:13193"/>
        <dbReference type="ChEBI" id="CHEBI:15377"/>
        <dbReference type="ChEBI" id="CHEBI:16240"/>
        <dbReference type="ChEBI" id="CHEBI:17499"/>
        <dbReference type="EC" id="1.11.1.21"/>
    </reaction>
</comment>
<comment type="catalytic activity">
    <reaction evidence="1">
        <text>2 H2O2 = O2 + 2 H2O</text>
        <dbReference type="Rhea" id="RHEA:20309"/>
        <dbReference type="ChEBI" id="CHEBI:15377"/>
        <dbReference type="ChEBI" id="CHEBI:15379"/>
        <dbReference type="ChEBI" id="CHEBI:16240"/>
        <dbReference type="EC" id="1.11.1.21"/>
    </reaction>
</comment>
<comment type="cofactor">
    <cofactor evidence="1">
        <name>heme b</name>
        <dbReference type="ChEBI" id="CHEBI:60344"/>
    </cofactor>
    <text evidence="1">Binds 1 heme b (iron(II)-protoporphyrin IX) group per dimer.</text>
</comment>
<comment type="subunit">
    <text evidence="1">Homodimer or homotetramer.</text>
</comment>
<comment type="PTM">
    <text evidence="1">Formation of the three residue Trp-Tyr-Met cross-link is important for the catalase, but not the peroxidase activity of the enzyme.</text>
</comment>
<comment type="similarity">
    <text evidence="1">Belongs to the peroxidase family. Peroxidase/catalase subfamily.</text>
</comment>
<dbReference type="EC" id="1.11.1.21" evidence="1"/>
<dbReference type="EMBL" id="AY643478">
    <property type="protein sequence ID" value="AAY43639.1"/>
    <property type="molecule type" value="Genomic_DNA"/>
</dbReference>
<dbReference type="SMR" id="Q4G4B1"/>
<dbReference type="STRING" id="636.AAW15_12005"/>
<dbReference type="PeroxiBase" id="3619">
    <property type="entry name" value="EtaCP01_PPD130"/>
</dbReference>
<dbReference type="GO" id="GO:0005829">
    <property type="term" value="C:cytosol"/>
    <property type="evidence" value="ECO:0007669"/>
    <property type="project" value="TreeGrafter"/>
</dbReference>
<dbReference type="GO" id="GO:0004096">
    <property type="term" value="F:catalase activity"/>
    <property type="evidence" value="ECO:0007669"/>
    <property type="project" value="UniProtKB-UniRule"/>
</dbReference>
<dbReference type="GO" id="GO:0020037">
    <property type="term" value="F:heme binding"/>
    <property type="evidence" value="ECO:0007669"/>
    <property type="project" value="InterPro"/>
</dbReference>
<dbReference type="GO" id="GO:0046872">
    <property type="term" value="F:metal ion binding"/>
    <property type="evidence" value="ECO:0007669"/>
    <property type="project" value="UniProtKB-KW"/>
</dbReference>
<dbReference type="GO" id="GO:0070301">
    <property type="term" value="P:cellular response to hydrogen peroxide"/>
    <property type="evidence" value="ECO:0007669"/>
    <property type="project" value="TreeGrafter"/>
</dbReference>
<dbReference type="GO" id="GO:0042744">
    <property type="term" value="P:hydrogen peroxide catabolic process"/>
    <property type="evidence" value="ECO:0007669"/>
    <property type="project" value="UniProtKB-KW"/>
</dbReference>
<dbReference type="CDD" id="cd00649">
    <property type="entry name" value="catalase_peroxidase_1"/>
    <property type="match status" value="1"/>
</dbReference>
<dbReference type="CDD" id="cd08200">
    <property type="entry name" value="catalase_peroxidase_2"/>
    <property type="match status" value="1"/>
</dbReference>
<dbReference type="FunFam" id="1.10.420.10:FF:000004">
    <property type="entry name" value="Catalase-peroxidase"/>
    <property type="match status" value="1"/>
</dbReference>
<dbReference type="FunFam" id="1.10.520.10:FF:000002">
    <property type="entry name" value="Catalase-peroxidase"/>
    <property type="match status" value="1"/>
</dbReference>
<dbReference type="Gene3D" id="1.10.520.10">
    <property type="match status" value="2"/>
</dbReference>
<dbReference type="Gene3D" id="1.10.420.10">
    <property type="entry name" value="Peroxidase, domain 2"/>
    <property type="match status" value="2"/>
</dbReference>
<dbReference type="HAMAP" id="MF_01961">
    <property type="entry name" value="Catal_peroxid"/>
    <property type="match status" value="1"/>
</dbReference>
<dbReference type="InterPro" id="IPR000763">
    <property type="entry name" value="Catalase_peroxidase"/>
</dbReference>
<dbReference type="InterPro" id="IPR002016">
    <property type="entry name" value="Haem_peroxidase"/>
</dbReference>
<dbReference type="InterPro" id="IPR010255">
    <property type="entry name" value="Haem_peroxidase_sf"/>
</dbReference>
<dbReference type="InterPro" id="IPR019794">
    <property type="entry name" value="Peroxidases_AS"/>
</dbReference>
<dbReference type="NCBIfam" id="TIGR00198">
    <property type="entry name" value="cat_per_HPI"/>
    <property type="match status" value="1"/>
</dbReference>
<dbReference type="NCBIfam" id="NF011635">
    <property type="entry name" value="PRK15061.1"/>
    <property type="match status" value="1"/>
</dbReference>
<dbReference type="PANTHER" id="PTHR30555:SF6">
    <property type="entry name" value="CATALASE-PEROXIDASE"/>
    <property type="match status" value="1"/>
</dbReference>
<dbReference type="PANTHER" id="PTHR30555">
    <property type="entry name" value="HYDROPEROXIDASE I, BIFUNCTIONAL CATALASE-PEROXIDASE"/>
    <property type="match status" value="1"/>
</dbReference>
<dbReference type="Pfam" id="PF00141">
    <property type="entry name" value="peroxidase"/>
    <property type="match status" value="2"/>
</dbReference>
<dbReference type="PRINTS" id="PR00460">
    <property type="entry name" value="BPEROXIDASE"/>
</dbReference>
<dbReference type="PRINTS" id="PR00458">
    <property type="entry name" value="PEROXIDASE"/>
</dbReference>
<dbReference type="SUPFAM" id="SSF48113">
    <property type="entry name" value="Heme-dependent peroxidases"/>
    <property type="match status" value="2"/>
</dbReference>
<dbReference type="PROSITE" id="PS00436">
    <property type="entry name" value="PEROXIDASE_2"/>
    <property type="match status" value="1"/>
</dbReference>
<dbReference type="PROSITE" id="PS50873">
    <property type="entry name" value="PEROXIDASE_4"/>
    <property type="match status" value="1"/>
</dbReference>
<accession>Q4G4B1</accession>
<sequence>MGNNNEFSSGKCPVMHGGMTSAGMASKDWWPNALNLDILHQHDTKTNPMGQQFNYREALKQLDVQALKDDLRALMTDSQPWWPADWGHYGGLMVRMAWHSAGSYRIADGRGGAGTGNQRFAPLNSWPDNVNLDKARRLLWPIKKKYGNKISWADLIVLAGTMAYESMGLKTFGFAFGREDIWHPEIDTYWGSEKEWLAPSGSEGSRYSGERDLENPLAAVMMGLIYVNPEGVDGHPDPQKTANDVRVTFARMAMNDEETVALTAGGHTVGKCHGNGSAANLGAAPEGADLQEQGLGWNNHTTRGIDRDTVSSGIEGAWTSKPTQWDNGYFDMLLGHEWTLTKSPAGAWQWVPIQIAEEDKPVDVEDPSIRLLPIMTDADMAMKVDPTYRQIAERFRQDPAYFSDVFARAWFKLTHRDLGPKSRYFGPDVPQEALIWQDPVPAGRSEYDVAAVKAKIAASGLSIADMVSTAWDSARTFRGSDKRGGANGARIRLAPQNTWEGNEPARLAKVLAVLEPIAAEFNVSVADVIVLAGNLGIEQAAKAAGVAIEVPFAPGRGDATQAMTDEASFEVLEPLADGFRNWLKKDYVVTAEELLLDRAQLMRLTACEMTVLIGGMRVLGANYGGSKVGVFTDRIGVLSNDFFVNLTDMSYTWKPTASNLYEIRERANGALKWTASRVDLVFGSNSILRAYAEVYAQDDNKEKFVRDFVAAWTKVMNADRYDLR</sequence>
<keyword id="KW-0349">Heme</keyword>
<keyword id="KW-0376">Hydrogen peroxide</keyword>
<keyword id="KW-0408">Iron</keyword>
<keyword id="KW-0479">Metal-binding</keyword>
<keyword id="KW-0560">Oxidoreductase</keyword>
<keyword id="KW-0575">Peroxidase</keyword>
<feature type="chain" id="PRO_0000354770" description="Catalase-peroxidase">
    <location>
        <begin position="1"/>
        <end position="724"/>
    </location>
</feature>
<feature type="active site" description="Proton acceptor" evidence="1">
    <location>
        <position position="99"/>
    </location>
</feature>
<feature type="binding site" description="axial binding residue" evidence="1">
    <location>
        <position position="267"/>
    </location>
    <ligand>
        <name>heme b</name>
        <dbReference type="ChEBI" id="CHEBI:60344"/>
    </ligand>
    <ligandPart>
        <name>Fe</name>
        <dbReference type="ChEBI" id="CHEBI:18248"/>
    </ligandPart>
</feature>
<feature type="site" description="Transition state stabilizer" evidence="1">
    <location>
        <position position="95"/>
    </location>
</feature>
<feature type="cross-link" description="Tryptophyl-tyrosyl-methioninium (Trp-Tyr) (with M-252)" evidence="1">
    <location>
        <begin position="98"/>
        <end position="226"/>
    </location>
</feature>
<feature type="cross-link" description="Tryptophyl-tyrosyl-methioninium (Tyr-Met) (with W-98)" evidence="1">
    <location>
        <begin position="226"/>
        <end position="252"/>
    </location>
</feature>
<reference key="1">
    <citation type="journal article" date="2005" name="Microbiology">
        <title>Role of type III secretion in Edwardsiella tarda virulence.</title>
        <authorList>
            <person name="Tan Y.P."/>
            <person name="Zheng J."/>
            <person name="Tung S.L."/>
            <person name="Rosenshine I."/>
            <person name="Leung K.Y."/>
        </authorList>
    </citation>
    <scope>NUCLEOTIDE SEQUENCE [GENOMIC DNA]</scope>
    <source>
        <strain>PPD130/91</strain>
    </source>
</reference>
<gene>
    <name evidence="1" type="primary">katG</name>
</gene>
<protein>
    <recommendedName>
        <fullName evidence="1">Catalase-peroxidase</fullName>
        <shortName evidence="1">CP</shortName>
        <ecNumber evidence="1">1.11.1.21</ecNumber>
    </recommendedName>
    <alternativeName>
        <fullName evidence="1">Peroxidase/catalase</fullName>
    </alternativeName>
</protein>
<proteinExistence type="inferred from homology"/>
<name>KATG_EDWTA</name>
<evidence type="ECO:0000255" key="1">
    <source>
        <dbReference type="HAMAP-Rule" id="MF_01961"/>
    </source>
</evidence>
<organism>
    <name type="scientific">Edwardsiella tarda</name>
    <dbReference type="NCBI Taxonomy" id="636"/>
    <lineage>
        <taxon>Bacteria</taxon>
        <taxon>Pseudomonadati</taxon>
        <taxon>Pseudomonadota</taxon>
        <taxon>Gammaproteobacteria</taxon>
        <taxon>Enterobacterales</taxon>
        <taxon>Hafniaceae</taxon>
        <taxon>Edwardsiella</taxon>
    </lineage>
</organism>